<proteinExistence type="evidence at transcript level"/>
<sequence length="52" mass="5339">VEQNWATLQGGEMTIQTTQASEATQAVASLAEAAVAASQEMQQGATVTMALN</sequence>
<reference key="1">
    <citation type="journal article" date="1995" name="J. Biol. Chem.">
        <title>Structure, expression, and chromosomal assignment of the human gene encoding nuclear respiratory factor 1.</title>
        <authorList>
            <person name="Gopalakrishnan L."/>
            <person name="Scarpulla R.C."/>
        </authorList>
    </citation>
    <scope>NUCLEOTIDE SEQUENCE [GENOMIC DNA]</scope>
    <source>
        <strain>Sprague-Dawley</strain>
    </source>
</reference>
<protein>
    <recommendedName>
        <fullName>Nuclear respiratory factor 1</fullName>
        <shortName>NRF-1</shortName>
    </recommendedName>
    <alternativeName>
        <fullName>Alpha palindromic-binding protein</fullName>
        <shortName>Alpha-pal</shortName>
    </alternativeName>
</protein>
<keyword id="KW-0010">Activator</keyword>
<keyword id="KW-0238">DNA-binding</keyword>
<keyword id="KW-0539">Nucleus</keyword>
<keyword id="KW-1185">Reference proteome</keyword>
<keyword id="KW-0804">Transcription</keyword>
<keyword id="KW-0805">Transcription regulation</keyword>
<gene>
    <name type="primary">Nrf1</name>
</gene>
<evidence type="ECO:0000250" key="1"/>
<evidence type="ECO:0000305" key="2"/>
<accession>Q62792</accession>
<comment type="function">
    <text evidence="1">Transcription factor that activates the expression of the EIF2S1 (EIF2-alpha) gene. Links the transcriptional modulation of key metabolic genes to cellular growth and development. Implicated in the control of nuclear genes required for respiration, heme biosynthesis, and mitochondrial DNA transcription and replication (By similarity).</text>
</comment>
<comment type="subunit">
    <text evidence="1">Homodimer. Binds DNA as a dimer. Interacts with PPRC1 (By similarity).</text>
</comment>
<comment type="subcellular location">
    <subcellularLocation>
        <location>Nucleus</location>
    </subcellularLocation>
</comment>
<comment type="tissue specificity">
    <text>Expressed at high levels in the lung and testis, at intermediate levels in the kidney, heart and brain and at low levels in the muscle and liver.</text>
</comment>
<comment type="PTM">
    <text evidence="1">Phosphorylation enhances DNA binding.</text>
</comment>
<comment type="similarity">
    <text evidence="2">Belongs to the NRF1/Ewg family.</text>
</comment>
<organism>
    <name type="scientific">Rattus norvegicus</name>
    <name type="common">Rat</name>
    <dbReference type="NCBI Taxonomy" id="10116"/>
    <lineage>
        <taxon>Eukaryota</taxon>
        <taxon>Metazoa</taxon>
        <taxon>Chordata</taxon>
        <taxon>Craniata</taxon>
        <taxon>Vertebrata</taxon>
        <taxon>Euteleostomi</taxon>
        <taxon>Mammalia</taxon>
        <taxon>Eutheria</taxon>
        <taxon>Euarchontoglires</taxon>
        <taxon>Glires</taxon>
        <taxon>Rodentia</taxon>
        <taxon>Myomorpha</taxon>
        <taxon>Muroidea</taxon>
        <taxon>Muridae</taxon>
        <taxon>Murinae</taxon>
        <taxon>Rattus</taxon>
    </lineage>
</organism>
<dbReference type="EMBL" id="U27700">
    <property type="protein sequence ID" value="AAA79014.1"/>
    <property type="molecule type" value="Genomic_DNA"/>
</dbReference>
<dbReference type="PaxDb" id="10116-ENSRNOP00000011851"/>
<dbReference type="UCSC" id="RGD:1304603">
    <property type="organism name" value="rat"/>
</dbReference>
<dbReference type="AGR" id="RGD:1304603"/>
<dbReference type="RGD" id="1304603">
    <property type="gene designation" value="Nrf1"/>
</dbReference>
<dbReference type="eggNOG" id="KOG1491">
    <property type="taxonomic scope" value="Eukaryota"/>
</dbReference>
<dbReference type="InParanoid" id="Q62792"/>
<dbReference type="Proteomes" id="UP000002494">
    <property type="component" value="Unplaced"/>
</dbReference>
<dbReference type="GO" id="GO:0005634">
    <property type="term" value="C:nucleus"/>
    <property type="evidence" value="ECO:0007669"/>
    <property type="project" value="UniProtKB-SubCell"/>
</dbReference>
<dbReference type="GO" id="GO:0001228">
    <property type="term" value="F:DNA-binding transcription activator activity, RNA polymerase II-specific"/>
    <property type="evidence" value="ECO:0000266"/>
    <property type="project" value="RGD"/>
</dbReference>
<dbReference type="GO" id="GO:0000978">
    <property type="term" value="F:RNA polymerase II cis-regulatory region sequence-specific DNA binding"/>
    <property type="evidence" value="ECO:0000266"/>
    <property type="project" value="RGD"/>
</dbReference>
<dbReference type="GO" id="GO:0031100">
    <property type="term" value="P:animal organ regeneration"/>
    <property type="evidence" value="ECO:0000270"/>
    <property type="project" value="RGD"/>
</dbReference>
<dbReference type="GO" id="GO:0007005">
    <property type="term" value="P:mitochondrion organization"/>
    <property type="evidence" value="ECO:0000266"/>
    <property type="project" value="RGD"/>
</dbReference>
<dbReference type="GO" id="GO:0045944">
    <property type="term" value="P:positive regulation of transcription by RNA polymerase II"/>
    <property type="evidence" value="ECO:0000266"/>
    <property type="project" value="RGD"/>
</dbReference>
<dbReference type="GO" id="GO:0051602">
    <property type="term" value="P:response to electrical stimulus"/>
    <property type="evidence" value="ECO:0000314"/>
    <property type="project" value="RGD"/>
</dbReference>
<dbReference type="GO" id="GO:0032355">
    <property type="term" value="P:response to estradiol"/>
    <property type="evidence" value="ECO:0000270"/>
    <property type="project" value="RGD"/>
</dbReference>
<dbReference type="GO" id="GO:0051593">
    <property type="term" value="P:response to folic acid"/>
    <property type="evidence" value="ECO:0000270"/>
    <property type="project" value="RGD"/>
</dbReference>
<dbReference type="GO" id="GO:0001666">
    <property type="term" value="P:response to hypoxia"/>
    <property type="evidence" value="ECO:0000270"/>
    <property type="project" value="RGD"/>
</dbReference>
<dbReference type="GO" id="GO:0032496">
    <property type="term" value="P:response to lipopolysaccharide"/>
    <property type="evidence" value="ECO:0000270"/>
    <property type="project" value="RGD"/>
</dbReference>
<dbReference type="GO" id="GO:0007584">
    <property type="term" value="P:response to nutrient"/>
    <property type="evidence" value="ECO:0000270"/>
    <property type="project" value="RGD"/>
</dbReference>
<feature type="chain" id="PRO_0000100210" description="Nuclear respiratory factor 1">
    <location>
        <begin position="1" status="less than"/>
        <end position="52" status="greater than"/>
    </location>
</feature>
<feature type="non-terminal residue">
    <location>
        <position position="1"/>
    </location>
</feature>
<feature type="non-terminal residue">
    <location>
        <position position="52"/>
    </location>
</feature>
<name>NRF1_RAT</name>